<accession>B0KRE9</accession>
<accession>Q9X3V4</accession>
<reference key="1">
    <citation type="journal article" date="1999" name="Appl. Environ. Microbiol.">
        <title>cumA, a gene encoding a multicopper oxidase, is involved in Mn2+ oxidation in Pseudomonas putida GB-1.</title>
        <authorList>
            <person name="Brouwers G.J."/>
            <person name="de Vrind J.P."/>
            <person name="Corstjens P.L."/>
            <person name="Cornelis P."/>
            <person name="Baysse C."/>
            <person name="de Vrind-de Jong E.W."/>
        </authorList>
    </citation>
    <scope>NUCLEOTIDE SEQUENCE [GENOMIC DNA]</scope>
</reference>
<reference key="2">
    <citation type="submission" date="2008-01" db="EMBL/GenBank/DDBJ databases">
        <title>Complete sequence of Pseudomonas putida GB-1.</title>
        <authorList>
            <consortium name="US DOE Joint Genome Institute"/>
            <person name="Copeland A."/>
            <person name="Lucas S."/>
            <person name="Lapidus A."/>
            <person name="Barry K."/>
            <person name="Glavina del Rio T."/>
            <person name="Dalin E."/>
            <person name="Tice H."/>
            <person name="Pitluck S."/>
            <person name="Bruce D."/>
            <person name="Goodwin L."/>
            <person name="Chertkov O."/>
            <person name="Brettin T."/>
            <person name="Detter J.C."/>
            <person name="Han C."/>
            <person name="Kuske C.R."/>
            <person name="Schmutz J."/>
            <person name="Larimer F."/>
            <person name="Land M."/>
            <person name="Hauser L."/>
            <person name="Kyrpides N."/>
            <person name="Kim E."/>
            <person name="McCarthy J.K."/>
            <person name="Richardson P."/>
        </authorList>
    </citation>
    <scope>NUCLEOTIDE SEQUENCE [LARGE SCALE GENOMIC DNA]</scope>
    <source>
        <strain>GB-1</strain>
    </source>
</reference>
<dbReference type="EC" id="4.2.2.n1" evidence="1"/>
<dbReference type="EMBL" id="AF086638">
    <property type="protein sequence ID" value="AAD24214.1"/>
    <property type="molecule type" value="Genomic_DNA"/>
</dbReference>
<dbReference type="EMBL" id="CP000926">
    <property type="protein sequence ID" value="ABY96943.1"/>
    <property type="molecule type" value="Genomic_DNA"/>
</dbReference>
<dbReference type="RefSeq" id="WP_012270727.1">
    <property type="nucleotide sequence ID" value="NC_010322.1"/>
</dbReference>
<dbReference type="SMR" id="B0KRE9"/>
<dbReference type="CAZy" id="GH23">
    <property type="family name" value="Glycoside Hydrolase Family 23"/>
</dbReference>
<dbReference type="KEGG" id="ppg:PputGB1_1033"/>
<dbReference type="eggNOG" id="COG4623">
    <property type="taxonomic scope" value="Bacteria"/>
</dbReference>
<dbReference type="HOGENOM" id="CLU_027494_0_1_6"/>
<dbReference type="Proteomes" id="UP000002157">
    <property type="component" value="Chromosome"/>
</dbReference>
<dbReference type="GO" id="GO:0009279">
    <property type="term" value="C:cell outer membrane"/>
    <property type="evidence" value="ECO:0007669"/>
    <property type="project" value="UniProtKB-SubCell"/>
</dbReference>
<dbReference type="GO" id="GO:0008933">
    <property type="term" value="F:peptidoglycan lytic transglycosylase activity"/>
    <property type="evidence" value="ECO:0007669"/>
    <property type="project" value="UniProtKB-UniRule"/>
</dbReference>
<dbReference type="GO" id="GO:0016998">
    <property type="term" value="P:cell wall macromolecule catabolic process"/>
    <property type="evidence" value="ECO:0007669"/>
    <property type="project" value="UniProtKB-UniRule"/>
</dbReference>
<dbReference type="GO" id="GO:0071555">
    <property type="term" value="P:cell wall organization"/>
    <property type="evidence" value="ECO:0007669"/>
    <property type="project" value="UniProtKB-KW"/>
</dbReference>
<dbReference type="GO" id="GO:0009253">
    <property type="term" value="P:peptidoglycan catabolic process"/>
    <property type="evidence" value="ECO:0007669"/>
    <property type="project" value="TreeGrafter"/>
</dbReference>
<dbReference type="CDD" id="cd13403">
    <property type="entry name" value="MLTF-like"/>
    <property type="match status" value="1"/>
</dbReference>
<dbReference type="CDD" id="cd01009">
    <property type="entry name" value="PBP2_YfhD_N"/>
    <property type="match status" value="1"/>
</dbReference>
<dbReference type="Gene3D" id="1.10.530.10">
    <property type="match status" value="1"/>
</dbReference>
<dbReference type="Gene3D" id="3.40.190.10">
    <property type="entry name" value="Periplasmic binding protein-like II"/>
    <property type="match status" value="2"/>
</dbReference>
<dbReference type="HAMAP" id="MF_02016">
    <property type="entry name" value="MltF"/>
    <property type="match status" value="1"/>
</dbReference>
<dbReference type="InterPro" id="IPR023346">
    <property type="entry name" value="Lysozyme-like_dom_sf"/>
</dbReference>
<dbReference type="InterPro" id="IPR023703">
    <property type="entry name" value="MltF"/>
</dbReference>
<dbReference type="InterPro" id="IPR001638">
    <property type="entry name" value="Solute-binding_3/MltF_N"/>
</dbReference>
<dbReference type="InterPro" id="IPR000189">
    <property type="entry name" value="Transglyc_AS"/>
</dbReference>
<dbReference type="InterPro" id="IPR008258">
    <property type="entry name" value="Transglycosylase_SLT_dom_1"/>
</dbReference>
<dbReference type="NCBIfam" id="NF008112">
    <property type="entry name" value="PRK10859.1"/>
    <property type="match status" value="1"/>
</dbReference>
<dbReference type="PANTHER" id="PTHR35936">
    <property type="entry name" value="MEMBRANE-BOUND LYTIC MUREIN TRANSGLYCOSYLASE F"/>
    <property type="match status" value="1"/>
</dbReference>
<dbReference type="PANTHER" id="PTHR35936:SF32">
    <property type="entry name" value="MEMBRANE-BOUND LYTIC MUREIN TRANSGLYCOSYLASE F"/>
    <property type="match status" value="1"/>
</dbReference>
<dbReference type="Pfam" id="PF00497">
    <property type="entry name" value="SBP_bac_3"/>
    <property type="match status" value="1"/>
</dbReference>
<dbReference type="Pfam" id="PF01464">
    <property type="entry name" value="SLT"/>
    <property type="match status" value="1"/>
</dbReference>
<dbReference type="SMART" id="SM00062">
    <property type="entry name" value="PBPb"/>
    <property type="match status" value="1"/>
</dbReference>
<dbReference type="SUPFAM" id="SSF53955">
    <property type="entry name" value="Lysozyme-like"/>
    <property type="match status" value="1"/>
</dbReference>
<dbReference type="SUPFAM" id="SSF53850">
    <property type="entry name" value="Periplasmic binding protein-like II"/>
    <property type="match status" value="1"/>
</dbReference>
<dbReference type="PROSITE" id="PS00922">
    <property type="entry name" value="TRANSGLYCOSYLASE"/>
    <property type="match status" value="1"/>
</dbReference>
<organism>
    <name type="scientific">Pseudomonas putida (strain GB-1)</name>
    <dbReference type="NCBI Taxonomy" id="76869"/>
    <lineage>
        <taxon>Bacteria</taxon>
        <taxon>Pseudomonadati</taxon>
        <taxon>Pseudomonadota</taxon>
        <taxon>Gammaproteobacteria</taxon>
        <taxon>Pseudomonadales</taxon>
        <taxon>Pseudomonadaceae</taxon>
        <taxon>Pseudomonas</taxon>
    </lineage>
</organism>
<feature type="signal peptide" evidence="1">
    <location>
        <begin position="1"/>
        <end position="29"/>
    </location>
</feature>
<feature type="chain" id="PRO_0000353963" description="Membrane-bound lytic murein transglycosylase F">
    <location>
        <begin position="30"/>
        <end position="485"/>
    </location>
</feature>
<feature type="region of interest" description="Non-LT domain" evidence="1">
    <location>
        <begin position="30"/>
        <end position="267"/>
    </location>
</feature>
<feature type="region of interest" description="LT domain" evidence="1">
    <location>
        <begin position="268"/>
        <end position="485"/>
    </location>
</feature>
<feature type="region of interest" description="Disordered" evidence="2">
    <location>
        <begin position="465"/>
        <end position="485"/>
    </location>
</feature>
<feature type="active site" evidence="1">
    <location>
        <position position="314"/>
    </location>
</feature>
<proteinExistence type="inferred from homology"/>
<evidence type="ECO:0000255" key="1">
    <source>
        <dbReference type="HAMAP-Rule" id="MF_02016"/>
    </source>
</evidence>
<evidence type="ECO:0000256" key="2">
    <source>
        <dbReference type="SAM" id="MobiDB-lite"/>
    </source>
</evidence>
<sequence>MFAHTALRQRCAKWLFATGLFLLLGACVEKPSTLERVKEDGVLRVITRNSPATYFQDRNGETGFEYELVQHFAEDLGVKLQIETADNLDELYDALGKPSGPVLAAAGLVSSERRKAQVKYSHPYLEVTPQVIYRNGRPRPTNAKGLVGKKIMVLKGSSHADLLAELKKQNPGLEYEESDAVEVVDLLRMVDEGQIDLTLVDSNELAMNQVYFPNVRVAFDVGDTRDQRWAVAAGEDNSLLNEINEFLDKAQKNGTLQRLKDRYYGHVDVLGYVGAYTFAQHLQQRLPKYEKHFKSYAKVEQVDWRLLAAIGYQESMWQPEVTSKTGVRGLMMLTQRTAQAMGVSNRLDPKQSIQGGAKYFMKIKEELDDSIQEPDRTWFALAAYNVGTGHLEDARTLAKREKLNPNKWLDVKKMLPRLSQKQWYRQTKYGYARGGEPVHFVANIRRYYDILTWVTQPQLEGQVAEGNLHVPGVNKDKPADQSPPM</sequence>
<protein>
    <recommendedName>
        <fullName evidence="1">Membrane-bound lytic murein transglycosylase F</fullName>
        <ecNumber evidence="1">4.2.2.n1</ecNumber>
    </recommendedName>
    <alternativeName>
        <fullName evidence="1">Murein lyase F</fullName>
    </alternativeName>
</protein>
<comment type="function">
    <text evidence="1">Murein-degrading enzyme that degrades murein glycan strands and insoluble, high-molecular weight murein sacculi, with the concomitant formation of a 1,6-anhydromuramoyl product. Lytic transglycosylases (LTs) play an integral role in the metabolism of the peptidoglycan (PG) sacculus. Their lytic action creates space within the PG sacculus to allow for its expansion as well as for the insertion of various structures such as secretion systems and flagella.</text>
</comment>
<comment type="catalytic activity">
    <reaction evidence="1">
        <text>Exolytic cleavage of the (1-&gt;4)-beta-glycosidic linkage between N-acetylmuramic acid (MurNAc) and N-acetylglucosamine (GlcNAc) residues in peptidoglycan, from either the reducing or the non-reducing ends of the peptidoglycan chains, with concomitant formation of a 1,6-anhydrobond in the MurNAc residue.</text>
        <dbReference type="EC" id="4.2.2.n1"/>
    </reaction>
</comment>
<comment type="subcellular location">
    <subcellularLocation>
        <location>Cell outer membrane</location>
        <topology>Peripheral membrane protein</topology>
    </subcellularLocation>
    <text evidence="1">Attached to the inner leaflet of the outer membrane.</text>
</comment>
<comment type="domain">
    <text evidence="1">The N-terminal domain does not have lytic activity and probably modulates enzymatic activity. The C-terminal domain is the catalytic active domain.</text>
</comment>
<comment type="similarity">
    <text evidence="1">In the N-terminal section; belongs to the bacterial solute-binding protein 3 family.</text>
</comment>
<comment type="similarity">
    <text evidence="1">In the C-terminal section; belongs to the transglycosylase Slt family.</text>
</comment>
<name>MLTF_PSEPG</name>
<keyword id="KW-0998">Cell outer membrane</keyword>
<keyword id="KW-0961">Cell wall biogenesis/degradation</keyword>
<keyword id="KW-0456">Lyase</keyword>
<keyword id="KW-0472">Membrane</keyword>
<keyword id="KW-0732">Signal</keyword>
<gene>
    <name evidence="1" type="primary">mltF</name>
    <name type="ordered locus">PputGB1_1033</name>
</gene>